<sequence length="197" mass="21542">MKVLQEKILNEGKVLSGDVLKVDAFLNHQIDPVLMQEIGKEFAKRFKEENITKIVTIESSGIAPAVMAALELGVKVIFARKRKSLTLQDNMYVANVYSFTKQETNEISLSRNHIDESDRVLIIDDFLANGQAALGLMSLVEQAGASIAGIGIVIEKAFQDGGKKLREQGVRVESLAEIASLGNGTVTFVQHETAEVK</sequence>
<proteinExistence type="inferred from homology"/>
<reference key="1">
    <citation type="submission" date="2009-02" db="EMBL/GenBank/DDBJ databases">
        <title>Genome sequence of Bacillus cereus 03BB102.</title>
        <authorList>
            <person name="Dodson R.J."/>
            <person name="Jackson P."/>
            <person name="Munk A.C."/>
            <person name="Brettin T."/>
            <person name="Bruce D."/>
            <person name="Detter C."/>
            <person name="Tapia R."/>
            <person name="Han C."/>
            <person name="Sutton G."/>
            <person name="Sims D."/>
        </authorList>
    </citation>
    <scope>NUCLEOTIDE SEQUENCE [LARGE SCALE GENOMIC DNA]</scope>
    <source>
        <strain>03BB102</strain>
    </source>
</reference>
<feature type="chain" id="PRO_1000164445" description="Xanthine phosphoribosyltransferase">
    <location>
        <begin position="1"/>
        <end position="197"/>
    </location>
</feature>
<feature type="binding site" evidence="1">
    <location>
        <position position="20"/>
    </location>
    <ligand>
        <name>xanthine</name>
        <dbReference type="ChEBI" id="CHEBI:17712"/>
    </ligand>
</feature>
<feature type="binding site" evidence="1">
    <location>
        <position position="27"/>
    </location>
    <ligand>
        <name>xanthine</name>
        <dbReference type="ChEBI" id="CHEBI:17712"/>
    </ligand>
</feature>
<feature type="binding site" evidence="1">
    <location>
        <begin position="128"/>
        <end position="132"/>
    </location>
    <ligand>
        <name>5-phospho-alpha-D-ribose 1-diphosphate</name>
        <dbReference type="ChEBI" id="CHEBI:58017"/>
    </ligand>
</feature>
<feature type="binding site" evidence="1">
    <location>
        <position position="156"/>
    </location>
    <ligand>
        <name>xanthine</name>
        <dbReference type="ChEBI" id="CHEBI:17712"/>
    </ligand>
</feature>
<dbReference type="EC" id="2.4.2.22" evidence="1"/>
<dbReference type="EMBL" id="CP001407">
    <property type="protein sequence ID" value="ACO28783.1"/>
    <property type="molecule type" value="Genomic_DNA"/>
</dbReference>
<dbReference type="RefSeq" id="WP_000866488.1">
    <property type="nucleotide sequence ID" value="NZ_CP009318.1"/>
</dbReference>
<dbReference type="SMR" id="C1ENK3"/>
<dbReference type="KEGG" id="bcx:BCA_1628"/>
<dbReference type="PATRIC" id="fig|572264.18.peg.1574"/>
<dbReference type="UniPathway" id="UPA00602">
    <property type="reaction ID" value="UER00658"/>
</dbReference>
<dbReference type="Proteomes" id="UP000002210">
    <property type="component" value="Chromosome"/>
</dbReference>
<dbReference type="GO" id="GO:0005737">
    <property type="term" value="C:cytoplasm"/>
    <property type="evidence" value="ECO:0007669"/>
    <property type="project" value="UniProtKB-SubCell"/>
</dbReference>
<dbReference type="GO" id="GO:0000310">
    <property type="term" value="F:xanthine phosphoribosyltransferase activity"/>
    <property type="evidence" value="ECO:0007669"/>
    <property type="project" value="UniProtKB-UniRule"/>
</dbReference>
<dbReference type="GO" id="GO:0006166">
    <property type="term" value="P:purine ribonucleoside salvage"/>
    <property type="evidence" value="ECO:0007669"/>
    <property type="project" value="UniProtKB-KW"/>
</dbReference>
<dbReference type="GO" id="GO:0046110">
    <property type="term" value="P:xanthine metabolic process"/>
    <property type="evidence" value="ECO:0007669"/>
    <property type="project" value="InterPro"/>
</dbReference>
<dbReference type="GO" id="GO:0032265">
    <property type="term" value="P:XMP salvage"/>
    <property type="evidence" value="ECO:0007669"/>
    <property type="project" value="UniProtKB-UniRule"/>
</dbReference>
<dbReference type="CDD" id="cd06223">
    <property type="entry name" value="PRTases_typeI"/>
    <property type="match status" value="1"/>
</dbReference>
<dbReference type="Gene3D" id="3.40.50.2020">
    <property type="match status" value="1"/>
</dbReference>
<dbReference type="HAMAP" id="MF_01184">
    <property type="entry name" value="XPRTase"/>
    <property type="match status" value="1"/>
</dbReference>
<dbReference type="InterPro" id="IPR000836">
    <property type="entry name" value="PRibTrfase_dom"/>
</dbReference>
<dbReference type="InterPro" id="IPR029057">
    <property type="entry name" value="PRTase-like"/>
</dbReference>
<dbReference type="InterPro" id="IPR050118">
    <property type="entry name" value="Pur/Pyrimidine_PRTase"/>
</dbReference>
<dbReference type="InterPro" id="IPR010079">
    <property type="entry name" value="Xanthine_PRibTrfase"/>
</dbReference>
<dbReference type="NCBIfam" id="NF006671">
    <property type="entry name" value="PRK09219.1"/>
    <property type="match status" value="1"/>
</dbReference>
<dbReference type="NCBIfam" id="TIGR01744">
    <property type="entry name" value="XPRTase"/>
    <property type="match status" value="1"/>
</dbReference>
<dbReference type="PANTHER" id="PTHR43864">
    <property type="entry name" value="HYPOXANTHINE/GUANINE PHOSPHORIBOSYLTRANSFERASE"/>
    <property type="match status" value="1"/>
</dbReference>
<dbReference type="PANTHER" id="PTHR43864:SF1">
    <property type="entry name" value="XANTHINE PHOSPHORIBOSYLTRANSFERASE"/>
    <property type="match status" value="1"/>
</dbReference>
<dbReference type="Pfam" id="PF00156">
    <property type="entry name" value="Pribosyltran"/>
    <property type="match status" value="1"/>
</dbReference>
<dbReference type="SUPFAM" id="SSF53271">
    <property type="entry name" value="PRTase-like"/>
    <property type="match status" value="1"/>
</dbReference>
<protein>
    <recommendedName>
        <fullName evidence="1">Xanthine phosphoribosyltransferase</fullName>
        <shortName evidence="1">XPRTase</shortName>
        <ecNumber evidence="1">2.4.2.22</ecNumber>
    </recommendedName>
</protein>
<keyword id="KW-0963">Cytoplasm</keyword>
<keyword id="KW-0328">Glycosyltransferase</keyword>
<keyword id="KW-0660">Purine salvage</keyword>
<keyword id="KW-0808">Transferase</keyword>
<gene>
    <name evidence="1" type="primary">xpt</name>
    <name type="ordered locus">BCA_1628</name>
</gene>
<name>XPT_BACC3</name>
<evidence type="ECO:0000255" key="1">
    <source>
        <dbReference type="HAMAP-Rule" id="MF_01184"/>
    </source>
</evidence>
<comment type="function">
    <text evidence="1">Converts the preformed base xanthine, a product of nucleic acid breakdown, to xanthosine 5'-monophosphate (XMP), so it can be reused for RNA or DNA synthesis.</text>
</comment>
<comment type="catalytic activity">
    <reaction evidence="1">
        <text>XMP + diphosphate = xanthine + 5-phospho-alpha-D-ribose 1-diphosphate</text>
        <dbReference type="Rhea" id="RHEA:10800"/>
        <dbReference type="ChEBI" id="CHEBI:17712"/>
        <dbReference type="ChEBI" id="CHEBI:33019"/>
        <dbReference type="ChEBI" id="CHEBI:57464"/>
        <dbReference type="ChEBI" id="CHEBI:58017"/>
        <dbReference type="EC" id="2.4.2.22"/>
    </reaction>
</comment>
<comment type="pathway">
    <text evidence="1">Purine metabolism; XMP biosynthesis via salvage pathway; XMP from xanthine: step 1/1.</text>
</comment>
<comment type="subunit">
    <text evidence="1">Homodimer.</text>
</comment>
<comment type="subcellular location">
    <subcellularLocation>
        <location evidence="1">Cytoplasm</location>
    </subcellularLocation>
</comment>
<comment type="similarity">
    <text evidence="1">Belongs to the purine/pyrimidine phosphoribosyltransferase family. Xpt subfamily.</text>
</comment>
<accession>C1ENK3</accession>
<organism>
    <name type="scientific">Bacillus cereus (strain 03BB102)</name>
    <dbReference type="NCBI Taxonomy" id="572264"/>
    <lineage>
        <taxon>Bacteria</taxon>
        <taxon>Bacillati</taxon>
        <taxon>Bacillota</taxon>
        <taxon>Bacilli</taxon>
        <taxon>Bacillales</taxon>
        <taxon>Bacillaceae</taxon>
        <taxon>Bacillus</taxon>
        <taxon>Bacillus cereus group</taxon>
    </lineage>
</organism>